<feature type="signal peptide" evidence="3">
    <location>
        <begin position="1"/>
        <end position="19"/>
    </location>
</feature>
<feature type="chain" id="PRO_0000394619" description="Probable arabinan endo-1,5-alpha-L-arabinosidase A">
    <location>
        <begin position="20"/>
        <end position="319"/>
    </location>
</feature>
<feature type="active site" description="Proton acceptor" evidence="2">
    <location>
        <position position="34"/>
    </location>
</feature>
<feature type="active site" description="Proton donor" evidence="2">
    <location>
        <position position="198"/>
    </location>
</feature>
<feature type="site" description="Important for catalytic activity, responsible for pKa modulation of the active site Glu and correct orientation of both the proton donor and substrate" evidence="2">
    <location>
        <position position="147"/>
    </location>
</feature>
<feature type="glycosylation site" description="N-linked (GlcNAc...) asparagine" evidence="3">
    <location>
        <position position="53"/>
    </location>
</feature>
<comment type="function">
    <text evidence="1">Endo-1,5-alpha-L-arabinanase involved in degradation of pectin. Its preferred substrate is linear 1,5-alpha-L-arabinan (By similarity).</text>
</comment>
<comment type="catalytic activity">
    <reaction>
        <text>Endohydrolysis of (1-&gt;5)-alpha-arabinofuranosidic linkages in (1-&gt;5)-arabinans.</text>
        <dbReference type="EC" id="3.2.1.99"/>
    </reaction>
</comment>
<comment type="pathway">
    <text>Glycan metabolism; L-arabinan degradation.</text>
</comment>
<comment type="subcellular location">
    <subcellularLocation>
        <location evidence="1">Secreted</location>
    </subcellularLocation>
</comment>
<comment type="similarity">
    <text evidence="4">Belongs to the glycosyl hydrolase 43 family.</text>
</comment>
<name>ABNA_ASPFN</name>
<accession>B8NDL1</accession>
<organism>
    <name type="scientific">Aspergillus flavus (strain ATCC 200026 / FGSC A1120 / IAM 13836 / NRRL 3357 / JCM 12722 / SRRC 167)</name>
    <dbReference type="NCBI Taxonomy" id="332952"/>
    <lineage>
        <taxon>Eukaryota</taxon>
        <taxon>Fungi</taxon>
        <taxon>Dikarya</taxon>
        <taxon>Ascomycota</taxon>
        <taxon>Pezizomycotina</taxon>
        <taxon>Eurotiomycetes</taxon>
        <taxon>Eurotiomycetidae</taxon>
        <taxon>Eurotiales</taxon>
        <taxon>Aspergillaceae</taxon>
        <taxon>Aspergillus</taxon>
        <taxon>Aspergillus subgen. Circumdati</taxon>
    </lineage>
</organism>
<sequence length="319" mass="34094">MYLQSSLALVLLRAAVVHGYANPGACSGACNIHDPSLIQNGDGTYYRFSTGNNISFASASSIEGPWTALGSVLPGGSSIDNSGRYDPWAPDVQKVGDLYYLYYAVSSFGTQESAIGLATSETMEEGTWTDKGSIVTSTTGDQYNAIDANLLVDGSANYLTFGSFWQDIFQVTLNGDATSSTSTPVNVAFDPATTHPVEGAYLYKYGDYYYLFYSWGTCCGYDTSRPAEGEEYKIKVCRSSTPTGNFVDASGVACTDGGGTVVLESHDNVYGPGGQGVYTDPNLGPVLYYHYVDTTIGYADSQKLFGWNAIDFSSGWPSV</sequence>
<dbReference type="EC" id="3.2.1.99"/>
<dbReference type="EMBL" id="EQ963477">
    <property type="protein sequence ID" value="EED51687.1"/>
    <property type="molecule type" value="Genomic_DNA"/>
</dbReference>
<dbReference type="RefSeq" id="XP_002378694.1">
    <property type="nucleotide sequence ID" value="XM_002378653.1"/>
</dbReference>
<dbReference type="SMR" id="B8NDL1"/>
<dbReference type="STRING" id="332952.B8NDL1"/>
<dbReference type="GlyCosmos" id="B8NDL1">
    <property type="glycosylation" value="1 site, No reported glycans"/>
</dbReference>
<dbReference type="EnsemblFungi" id="EED51687">
    <property type="protein sequence ID" value="EED51687"/>
    <property type="gene ID" value="AFLA_059500"/>
</dbReference>
<dbReference type="VEuPathDB" id="FungiDB:AFLA_005006"/>
<dbReference type="eggNOG" id="ENOG502QTQG">
    <property type="taxonomic scope" value="Eukaryota"/>
</dbReference>
<dbReference type="HOGENOM" id="CLU_009397_5_0_1"/>
<dbReference type="OMA" id="MNFGSFY"/>
<dbReference type="UniPathway" id="UPA00667"/>
<dbReference type="GO" id="GO:0005576">
    <property type="term" value="C:extracellular region"/>
    <property type="evidence" value="ECO:0007669"/>
    <property type="project" value="UniProtKB-SubCell"/>
</dbReference>
<dbReference type="GO" id="GO:0046558">
    <property type="term" value="F:arabinan endo-1,5-alpha-L-arabinosidase activity"/>
    <property type="evidence" value="ECO:0007669"/>
    <property type="project" value="UniProtKB-EC"/>
</dbReference>
<dbReference type="GO" id="GO:0031222">
    <property type="term" value="P:arabinan catabolic process"/>
    <property type="evidence" value="ECO:0007669"/>
    <property type="project" value="UniProtKB-UniPathway"/>
</dbReference>
<dbReference type="GO" id="GO:0045493">
    <property type="term" value="P:xylan catabolic process"/>
    <property type="evidence" value="ECO:0007669"/>
    <property type="project" value="UniProtKB-KW"/>
</dbReference>
<dbReference type="CDD" id="cd18831">
    <property type="entry name" value="GH43_AnAbnA-like"/>
    <property type="match status" value="1"/>
</dbReference>
<dbReference type="FunFam" id="2.115.10.20:FF:000005">
    <property type="entry name" value="Arabinan endo-1,5-alpha-L-arabinosidase"/>
    <property type="match status" value="1"/>
</dbReference>
<dbReference type="Gene3D" id="2.115.10.20">
    <property type="entry name" value="Glycosyl hydrolase domain, family 43"/>
    <property type="match status" value="1"/>
</dbReference>
<dbReference type="InterPro" id="IPR050727">
    <property type="entry name" value="GH43_arabinanases"/>
</dbReference>
<dbReference type="InterPro" id="IPR006710">
    <property type="entry name" value="Glyco_hydro_43"/>
</dbReference>
<dbReference type="InterPro" id="IPR016840">
    <property type="entry name" value="Glyco_hydro_43_endo_a_Ara-ase"/>
</dbReference>
<dbReference type="InterPro" id="IPR023296">
    <property type="entry name" value="Glyco_hydro_beta-prop_sf"/>
</dbReference>
<dbReference type="PANTHER" id="PTHR43301">
    <property type="entry name" value="ARABINAN ENDO-1,5-ALPHA-L-ARABINOSIDASE"/>
    <property type="match status" value="1"/>
</dbReference>
<dbReference type="PANTHER" id="PTHR43301:SF3">
    <property type="entry name" value="ARABINAN ENDO-1,5-ALPHA-L-ARABINOSIDASE A-RELATED"/>
    <property type="match status" value="1"/>
</dbReference>
<dbReference type="Pfam" id="PF04616">
    <property type="entry name" value="Glyco_hydro_43"/>
    <property type="match status" value="1"/>
</dbReference>
<dbReference type="PIRSF" id="PIRSF026534">
    <property type="entry name" value="Endo_alpha-L-arabinosidase"/>
    <property type="match status" value="1"/>
</dbReference>
<dbReference type="SUPFAM" id="SSF75005">
    <property type="entry name" value="Arabinanase/levansucrase/invertase"/>
    <property type="match status" value="1"/>
</dbReference>
<proteinExistence type="inferred from homology"/>
<gene>
    <name type="primary">abnA</name>
    <name type="ORF">AFLA_059500</name>
</gene>
<evidence type="ECO:0000250" key="1"/>
<evidence type="ECO:0000250" key="2">
    <source>
        <dbReference type="UniProtKB" id="P94522"/>
    </source>
</evidence>
<evidence type="ECO:0000255" key="3"/>
<evidence type="ECO:0000305" key="4"/>
<protein>
    <recommendedName>
        <fullName>Probable arabinan endo-1,5-alpha-L-arabinosidase A</fullName>
        <ecNumber>3.2.1.99</ecNumber>
    </recommendedName>
    <alternativeName>
        <fullName>Endo-1,5-alpha-L-arabinanase A</fullName>
        <shortName>ABN A</shortName>
    </alternativeName>
</protein>
<reference key="1">
    <citation type="journal article" date="2015" name="Genome Announc.">
        <title>Genome sequence of Aspergillus flavus NRRL 3357, a strain that causes aflatoxin contamination of food and feed.</title>
        <authorList>
            <person name="Nierman W.C."/>
            <person name="Yu J."/>
            <person name="Fedorova-Abrams N.D."/>
            <person name="Losada L."/>
            <person name="Cleveland T.E."/>
            <person name="Bhatnagar D."/>
            <person name="Bennett J.W."/>
            <person name="Dean R."/>
            <person name="Payne G.A."/>
        </authorList>
    </citation>
    <scope>NUCLEOTIDE SEQUENCE [LARGE SCALE GENOMIC DNA]</scope>
    <source>
        <strain>ATCC 200026 / FGSC A1120 / IAM 13836 / NRRL 3357 / JCM 12722 / SRRC 167</strain>
    </source>
</reference>
<keyword id="KW-0119">Carbohydrate metabolism</keyword>
<keyword id="KW-0325">Glycoprotein</keyword>
<keyword id="KW-0326">Glycosidase</keyword>
<keyword id="KW-0378">Hydrolase</keyword>
<keyword id="KW-0624">Polysaccharide degradation</keyword>
<keyword id="KW-0964">Secreted</keyword>
<keyword id="KW-0732">Signal</keyword>
<keyword id="KW-0858">Xylan degradation</keyword>